<proteinExistence type="inferred from homology"/>
<comment type="function">
    <text>Involved in the transposition of the insertion sequence IS2.</text>
</comment>
<comment type="similarity">
    <text evidence="1">Belongs to the transposase 8 family.</text>
</comment>
<comment type="sequence caution" evidence="1">
    <conflict type="erroneous initiation">
        <sequence resource="EMBL-CDS" id="BAA15822"/>
    </conflict>
    <text>Extended N-terminus.</text>
</comment>
<keyword id="KW-0233">DNA recombination</keyword>
<keyword id="KW-0238">DNA-binding</keyword>
<keyword id="KW-1185">Reference proteome</keyword>
<keyword id="KW-0814">Transposable element</keyword>
<keyword id="KW-0815">Transposition</keyword>
<evidence type="ECO:0000305" key="1"/>
<protein>
    <recommendedName>
        <fullName>Transposase InsC for insertion element IS2F</fullName>
    </recommendedName>
</protein>
<sequence length="121" mass="13452">MIDVLGPEKRRRRTTQEKIAIVQQSFEPGMTVSLVARQHGVAASQLFLWRKQYQEGSLTAVAAGEQVVPASELAAAMKQIKELQRLLGKKTMENELLKEAVEYGRAKKWIAHAPLLPGDGE</sequence>
<organism>
    <name type="scientific">Escherichia coli (strain K12)</name>
    <dbReference type="NCBI Taxonomy" id="83333"/>
    <lineage>
        <taxon>Bacteria</taxon>
        <taxon>Pseudomonadati</taxon>
        <taxon>Pseudomonadota</taxon>
        <taxon>Gammaproteobacteria</taxon>
        <taxon>Enterobacterales</taxon>
        <taxon>Enterobacteriaceae</taxon>
        <taxon>Escherichia</taxon>
    </lineage>
</organism>
<reference key="1">
    <citation type="journal article" date="1996" name="DNA Res.">
        <title>A 460-kb DNA sequence of the Escherichia coli K-12 genome corresponding to the 40.1-50.0 min region on the linkage map.</title>
        <authorList>
            <person name="Itoh T."/>
            <person name="Aiba H."/>
            <person name="Baba T."/>
            <person name="Fujita K."/>
            <person name="Hayashi K."/>
            <person name="Inada T."/>
            <person name="Isono K."/>
            <person name="Kasai H."/>
            <person name="Kimura S."/>
            <person name="Kitakawa M."/>
            <person name="Kitagawa M."/>
            <person name="Makino K."/>
            <person name="Miki T."/>
            <person name="Mizobuchi K."/>
            <person name="Mori H."/>
            <person name="Mori T."/>
            <person name="Motomura K."/>
            <person name="Nakade S."/>
            <person name="Nakamura Y."/>
            <person name="Nashimoto H."/>
            <person name="Nishio Y."/>
            <person name="Oshima T."/>
            <person name="Saito N."/>
            <person name="Sampei G."/>
            <person name="Seki Y."/>
            <person name="Sivasundaram S."/>
            <person name="Tagami H."/>
            <person name="Takeda J."/>
            <person name="Takemoto K."/>
            <person name="Wada C."/>
            <person name="Yamamoto Y."/>
            <person name="Horiuchi T."/>
        </authorList>
    </citation>
    <scope>NUCLEOTIDE SEQUENCE [LARGE SCALE GENOMIC DNA]</scope>
    <source>
        <strain>K12 / W3110 / ATCC 27325 / DSM 5911</strain>
    </source>
</reference>
<reference key="2">
    <citation type="journal article" date="1997" name="Science">
        <title>The complete genome sequence of Escherichia coli K-12.</title>
        <authorList>
            <person name="Blattner F.R."/>
            <person name="Plunkett G. III"/>
            <person name="Bloch C.A."/>
            <person name="Perna N.T."/>
            <person name="Burland V."/>
            <person name="Riley M."/>
            <person name="Collado-Vides J."/>
            <person name="Glasner J.D."/>
            <person name="Rode C.K."/>
            <person name="Mayhew G.F."/>
            <person name="Gregor J."/>
            <person name="Davis N.W."/>
            <person name="Kirkpatrick H.A."/>
            <person name="Goeden M.A."/>
            <person name="Rose D.J."/>
            <person name="Mau B."/>
            <person name="Shao Y."/>
        </authorList>
    </citation>
    <scope>NUCLEOTIDE SEQUENCE [LARGE SCALE GENOMIC DNA]</scope>
    <source>
        <strain>K12 / MG1655 / ATCC 47076</strain>
    </source>
</reference>
<reference key="3">
    <citation type="journal article" date="2006" name="Nucleic Acids Res.">
        <title>Escherichia coli K-12: a cooperatively developed annotation snapshot -- 2005.</title>
        <authorList>
            <person name="Riley M."/>
            <person name="Abe T."/>
            <person name="Arnaud M.B."/>
            <person name="Berlyn M.K.B."/>
            <person name="Blattner F.R."/>
            <person name="Chaudhuri R.R."/>
            <person name="Glasner J.D."/>
            <person name="Horiuchi T."/>
            <person name="Keseler I.M."/>
            <person name="Kosuge T."/>
            <person name="Mori H."/>
            <person name="Perna N.T."/>
            <person name="Plunkett G. III"/>
            <person name="Rudd K.E."/>
            <person name="Serres M.H."/>
            <person name="Thomas G.H."/>
            <person name="Thomson N.R."/>
            <person name="Wishart D."/>
            <person name="Wanner B.L."/>
        </authorList>
    </citation>
    <scope>SEQUENCE REVISION TO 34</scope>
</reference>
<reference key="4">
    <citation type="journal article" date="2006" name="Mol. Syst. Biol.">
        <title>Highly accurate genome sequences of Escherichia coli K-12 strains MG1655 and W3110.</title>
        <authorList>
            <person name="Hayashi K."/>
            <person name="Morooka N."/>
            <person name="Yamamoto Y."/>
            <person name="Fujita K."/>
            <person name="Isono K."/>
            <person name="Choi S."/>
            <person name="Ohtsubo E."/>
            <person name="Baba T."/>
            <person name="Wanner B.L."/>
            <person name="Mori H."/>
            <person name="Horiuchi T."/>
        </authorList>
    </citation>
    <scope>NUCLEOTIDE SEQUENCE [LARGE SCALE GENOMIC DNA]</scope>
    <source>
        <strain>K12 / W3110 / ATCC 27325 / DSM 5911</strain>
    </source>
</reference>
<gene>
    <name type="primary">insC3</name>
    <name type="ordered locus">b1997</name>
    <name type="ordered locus">JW1978</name>
</gene>
<feature type="chain" id="PRO_0000393450" description="Transposase InsC for insertion element IS2F">
    <location>
        <begin position="1"/>
        <end position="121"/>
    </location>
</feature>
<accession>P0CF42</accession>
<accession>O07989</accession>
<accession>O08018</accession>
<accession>O08019</accession>
<accession>P0C5W2</accession>
<accession>P19776</accession>
<accession>P76357</accession>
<accession>P77346</accession>
<accession>Q2MBI5</accession>
<accession>Q2MC65</accession>
<accession>Q79BJ2</accession>
<accession>Q9JMT0</accession>
<dbReference type="EMBL" id="U00096">
    <property type="protein sequence ID" value="AAT48140.2"/>
    <property type="molecule type" value="Genomic_DNA"/>
</dbReference>
<dbReference type="EMBL" id="AP009048">
    <property type="protein sequence ID" value="BAA15822.1"/>
    <property type="status" value="ALT_INIT"/>
    <property type="molecule type" value="Genomic_DNA"/>
</dbReference>
<dbReference type="PIR" id="B65240">
    <property type="entry name" value="B65240"/>
</dbReference>
<dbReference type="RefSeq" id="YP_026163.2">
    <property type="nucleotide sequence ID" value="NC_000913.3"/>
</dbReference>
<dbReference type="SMR" id="P0CF42"/>
<dbReference type="FunCoup" id="P0CF42">
    <property type="interactions" value="53"/>
</dbReference>
<dbReference type="jPOST" id="P0CF42"/>
<dbReference type="EnsemblBacteria" id="AAT48140">
    <property type="protein sequence ID" value="AAT48140"/>
    <property type="gene ID" value="b1997"/>
</dbReference>
<dbReference type="GeneID" id="946455"/>
<dbReference type="KEGG" id="ecj:JW1978"/>
<dbReference type="KEGG" id="eco:b0360"/>
<dbReference type="KEGG" id="eco:b1403"/>
<dbReference type="KEGG" id="eco:b1997"/>
<dbReference type="KEGG" id="eco:b2861"/>
<dbReference type="KEGG" id="eco:b3044"/>
<dbReference type="KEGG" id="eco:b4272"/>
<dbReference type="KEGG" id="ecoc:C3026_00670"/>
<dbReference type="KEGG" id="ecoc:C3026_03840"/>
<dbReference type="KEGG" id="ecoc:C3026_06235"/>
<dbReference type="KEGG" id="ecoc:C3026_08180"/>
<dbReference type="KEGG" id="ecoc:C3026_09100"/>
<dbReference type="KEGG" id="ecoc:C3026_11265"/>
<dbReference type="KEGG" id="ecoc:C3026_15305"/>
<dbReference type="KEGG" id="ecoc:C3026_15700"/>
<dbReference type="KEGG" id="ecoc:C3026_16625"/>
<dbReference type="KEGG" id="ecoc:C3026_20340"/>
<dbReference type="KEGG" id="ecoc:C3026_23040"/>
<dbReference type="KEGG" id="ecoc:C3026_24220"/>
<dbReference type="EchoBASE" id="EB4732"/>
<dbReference type="HOGENOM" id="CLU_027402_25_0_6"/>
<dbReference type="InParanoid" id="P0CF42"/>
<dbReference type="PhylomeDB" id="P0CF42"/>
<dbReference type="BioCyc" id="EcoCyc:MONOMER0-4251"/>
<dbReference type="PRO" id="PR:P0CF42"/>
<dbReference type="Proteomes" id="UP000000625">
    <property type="component" value="Chromosome"/>
</dbReference>
<dbReference type="GO" id="GO:0003677">
    <property type="term" value="F:DNA binding"/>
    <property type="evidence" value="ECO:0007669"/>
    <property type="project" value="UniProtKB-KW"/>
</dbReference>
<dbReference type="GO" id="GO:0004803">
    <property type="term" value="F:transposase activity"/>
    <property type="evidence" value="ECO:0007669"/>
    <property type="project" value="InterPro"/>
</dbReference>
<dbReference type="GO" id="GO:0006313">
    <property type="term" value="P:DNA transposition"/>
    <property type="evidence" value="ECO:0007669"/>
    <property type="project" value="InterPro"/>
</dbReference>
<dbReference type="Gene3D" id="1.10.10.10">
    <property type="entry name" value="Winged helix-like DNA-binding domain superfamily/Winged helix DNA-binding domain"/>
    <property type="match status" value="1"/>
</dbReference>
<dbReference type="InterPro" id="IPR009057">
    <property type="entry name" value="Homeodomain-like_sf"/>
</dbReference>
<dbReference type="InterPro" id="IPR002514">
    <property type="entry name" value="Transposase_8"/>
</dbReference>
<dbReference type="InterPro" id="IPR036388">
    <property type="entry name" value="WH-like_DNA-bd_sf"/>
</dbReference>
<dbReference type="NCBIfam" id="NF006928">
    <property type="entry name" value="PRK09413.1"/>
    <property type="match status" value="1"/>
</dbReference>
<dbReference type="PANTHER" id="PTHR37936">
    <property type="entry name" value="TRANSPOSASE INSC FOR INSERTION ELEMENT IS2A-RELATED"/>
    <property type="match status" value="1"/>
</dbReference>
<dbReference type="PANTHER" id="PTHR37936:SF3">
    <property type="entry name" value="TRANSPOSASE INSC FOR INSERTION ELEMENT IS2A-RELATED"/>
    <property type="match status" value="1"/>
</dbReference>
<dbReference type="Pfam" id="PF01527">
    <property type="entry name" value="HTH_Tnp_1"/>
    <property type="match status" value="1"/>
</dbReference>
<dbReference type="SUPFAM" id="SSF46689">
    <property type="entry name" value="Homeodomain-like"/>
    <property type="match status" value="1"/>
</dbReference>
<name>INSC3_ECOLI</name>